<keyword id="KW-0903">Direct protein sequencing</keyword>
<keyword id="KW-1015">Disulfide bond</keyword>
<keyword id="KW-0872">Ion channel impairing toxin</keyword>
<keyword id="KW-0166">Nematocyst</keyword>
<keyword id="KW-0528">Neurotoxin</keyword>
<keyword id="KW-0964">Secreted</keyword>
<keyword id="KW-0800">Toxin</keyword>
<keyword id="KW-0738">Voltage-gated sodium channel impairing toxin</keyword>
<reference key="1">
    <citation type="journal article" date="1997" name="Toxicon">
        <title>Halcurin, a polypeptide toxin from the sea anemone Halcurias sp., with a structural resemblance to type 1 and 2 toxins.</title>
        <authorList>
            <person name="Ishida M."/>
            <person name="Yokoyama A."/>
            <person name="Shimakura K."/>
            <person name="Nagashima Y."/>
            <person name="Shiomi K."/>
        </authorList>
    </citation>
    <scope>PROTEIN SEQUENCE</scope>
    <scope>FUNCTION</scope>
    <scope>SUBCELLULAR LOCATION</scope>
    <scope>TOXIC DOSE</scope>
    <scope>MASS SPECTROMETRY</scope>
</reference>
<reference key="2">
    <citation type="journal article" date="2012" name="Toxicon">
        <title>Development of a rational nomenclature for naming peptide and protein toxins from sea anemones.</title>
        <authorList>
            <person name="Oliveira J.S."/>
            <person name="Fuentes-Silva D."/>
            <person name="King G.F."/>
        </authorList>
    </citation>
    <scope>NOMENCLATURE</scope>
</reference>
<name>NA2H_ISOCA</name>
<sequence length="47" mass="5086">VACRCESDGPDVRSATFTGTVDLWNCNTGWHKCIATYTAVASCCKKD</sequence>
<protein>
    <recommendedName>
        <fullName evidence="3">Delta-halcutoxin-Hcg1a</fullName>
        <shortName evidence="3">Delta-HCTX-Hcg1a</shortName>
    </recommendedName>
    <alternativeName>
        <fullName evidence="4">Halcurin</fullName>
    </alternativeName>
</protein>
<accession>P0C5G6</accession>
<evidence type="ECO:0000250" key="1">
    <source>
        <dbReference type="UniProtKB" id="P19651"/>
    </source>
</evidence>
<evidence type="ECO:0000269" key="2">
    <source>
    </source>
</evidence>
<evidence type="ECO:0000303" key="3">
    <source>
    </source>
</evidence>
<evidence type="ECO:0000303" key="4">
    <source>
    </source>
</evidence>
<evidence type="ECO:0000305" key="5"/>
<evidence type="ECO:0000305" key="6">
    <source>
    </source>
</evidence>
<comment type="function">
    <text evidence="2">Is potently lethal to crabs, although it showed neither lethal activity in mice nor hemolytic activity. May bind to voltage-gated sodium channels (Nav), thereby delaying their inactivation during signal transduction.</text>
</comment>
<comment type="subcellular location">
    <subcellularLocation>
        <location evidence="2">Secreted</location>
    </subcellularLocation>
    <subcellularLocation>
        <location evidence="6">Nematocyst</location>
    </subcellularLocation>
</comment>
<comment type="mass spectrometry" mass="5074.0" method="MALDI" evidence="2"/>
<comment type="toxic dose">
    <text evidence="2">LD(50) is 5.8 ug/kg against crabs.</text>
</comment>
<comment type="similarity">
    <text evidence="5">Belongs to the sea anemone sodium channel inhibitory toxin family. Type II subfamily.</text>
</comment>
<comment type="caution">
    <text evidence="5">This toxin probably comes from Halcurias carlgreni, although the identification is not definitive.</text>
</comment>
<feature type="peptide" id="PRO_0000305120" description="Delta-halcutoxin-Hcg1a" evidence="2">
    <location>
        <begin position="1"/>
        <end position="47"/>
    </location>
</feature>
<feature type="disulfide bond" evidence="1">
    <location>
        <begin position="3"/>
        <end position="43"/>
    </location>
</feature>
<feature type="disulfide bond" evidence="1">
    <location>
        <begin position="5"/>
        <end position="33"/>
    </location>
</feature>
<feature type="disulfide bond" evidence="1">
    <location>
        <begin position="26"/>
        <end position="44"/>
    </location>
</feature>
<dbReference type="SMR" id="P0C5G6"/>
<dbReference type="GO" id="GO:0005576">
    <property type="term" value="C:extracellular region"/>
    <property type="evidence" value="ECO:0007669"/>
    <property type="project" value="UniProtKB-SubCell"/>
</dbReference>
<dbReference type="GO" id="GO:0042151">
    <property type="term" value="C:nematocyst"/>
    <property type="evidence" value="ECO:0007669"/>
    <property type="project" value="UniProtKB-SubCell"/>
</dbReference>
<dbReference type="GO" id="GO:0017080">
    <property type="term" value="F:sodium channel regulator activity"/>
    <property type="evidence" value="ECO:0007669"/>
    <property type="project" value="UniProtKB-KW"/>
</dbReference>
<dbReference type="GO" id="GO:0090729">
    <property type="term" value="F:toxin activity"/>
    <property type="evidence" value="ECO:0007669"/>
    <property type="project" value="UniProtKB-KW"/>
</dbReference>
<dbReference type="GO" id="GO:0009966">
    <property type="term" value="P:regulation of signal transduction"/>
    <property type="evidence" value="ECO:0007669"/>
    <property type="project" value="InterPro"/>
</dbReference>
<dbReference type="Gene3D" id="2.20.20.10">
    <property type="entry name" value="Anthopleurin-A"/>
    <property type="match status" value="1"/>
</dbReference>
<dbReference type="InterPro" id="IPR000693">
    <property type="entry name" value="Anenome_toxin"/>
</dbReference>
<dbReference type="InterPro" id="IPR023355">
    <property type="entry name" value="Myo_ane_neurotoxin_sf"/>
</dbReference>
<dbReference type="Pfam" id="PF00706">
    <property type="entry name" value="Toxin_4"/>
    <property type="match status" value="1"/>
</dbReference>
<dbReference type="PIRSF" id="PIRSF001905">
    <property type="entry name" value="Anenome_toxin"/>
    <property type="match status" value="1"/>
</dbReference>
<dbReference type="SUPFAM" id="SSF57392">
    <property type="entry name" value="Defensin-like"/>
    <property type="match status" value="1"/>
</dbReference>
<proteinExistence type="evidence at protein level"/>
<organism>
    <name type="scientific">Isohalcurias carlgreni</name>
    <name type="common">Sea anemone</name>
    <name type="synonym">Halcurias carlgreni</name>
    <dbReference type="NCBI Taxonomy" id="3283203"/>
    <lineage>
        <taxon>Eukaryota</taxon>
        <taxon>Metazoa</taxon>
        <taxon>Cnidaria</taxon>
        <taxon>Anthozoa</taxon>
        <taxon>Hexacorallia</taxon>
        <taxon>Actiniaria</taxon>
        <taxon>Endocoelantheae</taxon>
        <taxon>Halcuriidae</taxon>
        <taxon>Isohalcurias</taxon>
    </lineage>
</organism>